<feature type="chain" id="PRO_1000061090" description="Methylglyoxal synthase">
    <location>
        <begin position="1"/>
        <end position="152"/>
    </location>
</feature>
<feature type="domain" description="MGS-like" evidence="1">
    <location>
        <begin position="6"/>
        <end position="152"/>
    </location>
</feature>
<feature type="active site" description="Proton donor/acceptor" evidence="1">
    <location>
        <position position="71"/>
    </location>
</feature>
<feature type="binding site" evidence="1">
    <location>
        <position position="19"/>
    </location>
    <ligand>
        <name>substrate</name>
    </ligand>
</feature>
<feature type="binding site" evidence="1">
    <location>
        <position position="23"/>
    </location>
    <ligand>
        <name>substrate</name>
    </ligand>
</feature>
<feature type="binding site" evidence="1">
    <location>
        <begin position="45"/>
        <end position="48"/>
    </location>
    <ligand>
        <name>substrate</name>
    </ligand>
</feature>
<feature type="binding site" evidence="1">
    <location>
        <begin position="65"/>
        <end position="66"/>
    </location>
    <ligand>
        <name>substrate</name>
    </ligand>
</feature>
<feature type="binding site" evidence="1">
    <location>
        <position position="98"/>
    </location>
    <ligand>
        <name>substrate</name>
    </ligand>
</feature>
<evidence type="ECO:0000255" key="1">
    <source>
        <dbReference type="HAMAP-Rule" id="MF_00549"/>
    </source>
</evidence>
<keyword id="KW-0456">Lyase</keyword>
<reference key="1">
    <citation type="submission" date="2007-09" db="EMBL/GenBank/DDBJ databases">
        <title>Complete sequence of chromosome of Serratia proteamaculans 568.</title>
        <authorList>
            <consortium name="US DOE Joint Genome Institute"/>
            <person name="Copeland A."/>
            <person name="Lucas S."/>
            <person name="Lapidus A."/>
            <person name="Barry K."/>
            <person name="Glavina del Rio T."/>
            <person name="Dalin E."/>
            <person name="Tice H."/>
            <person name="Pitluck S."/>
            <person name="Chain P."/>
            <person name="Malfatti S."/>
            <person name="Shin M."/>
            <person name="Vergez L."/>
            <person name="Schmutz J."/>
            <person name="Larimer F."/>
            <person name="Land M."/>
            <person name="Hauser L."/>
            <person name="Kyrpides N."/>
            <person name="Kim E."/>
            <person name="Taghavi S."/>
            <person name="Newman L."/>
            <person name="Vangronsveld J."/>
            <person name="van der Lelie D."/>
            <person name="Richardson P."/>
        </authorList>
    </citation>
    <scope>NUCLEOTIDE SEQUENCE [LARGE SCALE GENOMIC DNA]</scope>
    <source>
        <strain>568</strain>
    </source>
</reference>
<dbReference type="EC" id="4.2.3.3" evidence="1"/>
<dbReference type="EMBL" id="CP000826">
    <property type="protein sequence ID" value="ABV40864.1"/>
    <property type="molecule type" value="Genomic_DNA"/>
</dbReference>
<dbReference type="SMR" id="A8GCM4"/>
<dbReference type="STRING" id="399741.Spro_1760"/>
<dbReference type="KEGG" id="spe:Spro_1760"/>
<dbReference type="eggNOG" id="COG1803">
    <property type="taxonomic scope" value="Bacteria"/>
</dbReference>
<dbReference type="HOGENOM" id="CLU_120420_0_1_6"/>
<dbReference type="OrthoDB" id="9787147at2"/>
<dbReference type="GO" id="GO:0005829">
    <property type="term" value="C:cytosol"/>
    <property type="evidence" value="ECO:0007669"/>
    <property type="project" value="TreeGrafter"/>
</dbReference>
<dbReference type="GO" id="GO:0008929">
    <property type="term" value="F:methylglyoxal synthase activity"/>
    <property type="evidence" value="ECO:0007669"/>
    <property type="project" value="UniProtKB-UniRule"/>
</dbReference>
<dbReference type="GO" id="GO:0019242">
    <property type="term" value="P:methylglyoxal biosynthetic process"/>
    <property type="evidence" value="ECO:0007669"/>
    <property type="project" value="UniProtKB-UniRule"/>
</dbReference>
<dbReference type="CDD" id="cd01422">
    <property type="entry name" value="MGS"/>
    <property type="match status" value="1"/>
</dbReference>
<dbReference type="FunFam" id="3.40.50.1380:FF:000002">
    <property type="entry name" value="Methylglyoxal synthase"/>
    <property type="match status" value="1"/>
</dbReference>
<dbReference type="Gene3D" id="3.40.50.1380">
    <property type="entry name" value="Methylglyoxal synthase-like domain"/>
    <property type="match status" value="1"/>
</dbReference>
<dbReference type="HAMAP" id="MF_00549">
    <property type="entry name" value="Methylglyoxal_synth"/>
    <property type="match status" value="1"/>
</dbReference>
<dbReference type="InterPro" id="IPR004363">
    <property type="entry name" value="Methylgl_synth"/>
</dbReference>
<dbReference type="InterPro" id="IPR018148">
    <property type="entry name" value="Methylglyoxal_synth_AS"/>
</dbReference>
<dbReference type="InterPro" id="IPR011607">
    <property type="entry name" value="MGS-like_dom"/>
</dbReference>
<dbReference type="InterPro" id="IPR036914">
    <property type="entry name" value="MGS-like_dom_sf"/>
</dbReference>
<dbReference type="NCBIfam" id="TIGR00160">
    <property type="entry name" value="MGSA"/>
    <property type="match status" value="1"/>
</dbReference>
<dbReference type="NCBIfam" id="NF003559">
    <property type="entry name" value="PRK05234.1"/>
    <property type="match status" value="1"/>
</dbReference>
<dbReference type="PANTHER" id="PTHR30492">
    <property type="entry name" value="METHYLGLYOXAL SYNTHASE"/>
    <property type="match status" value="1"/>
</dbReference>
<dbReference type="PANTHER" id="PTHR30492:SF0">
    <property type="entry name" value="METHYLGLYOXAL SYNTHASE"/>
    <property type="match status" value="1"/>
</dbReference>
<dbReference type="Pfam" id="PF02142">
    <property type="entry name" value="MGS"/>
    <property type="match status" value="1"/>
</dbReference>
<dbReference type="PIRSF" id="PIRSF006614">
    <property type="entry name" value="Methylglyox_syn"/>
    <property type="match status" value="1"/>
</dbReference>
<dbReference type="SMART" id="SM00851">
    <property type="entry name" value="MGS"/>
    <property type="match status" value="1"/>
</dbReference>
<dbReference type="SUPFAM" id="SSF52335">
    <property type="entry name" value="Methylglyoxal synthase-like"/>
    <property type="match status" value="1"/>
</dbReference>
<dbReference type="PROSITE" id="PS01335">
    <property type="entry name" value="METHYLGLYOXAL_SYNTH"/>
    <property type="match status" value="1"/>
</dbReference>
<dbReference type="PROSITE" id="PS51855">
    <property type="entry name" value="MGS"/>
    <property type="match status" value="1"/>
</dbReference>
<comment type="function">
    <text evidence="1">Catalyzes the formation of methylglyoxal from dihydroxyacetone phosphate.</text>
</comment>
<comment type="catalytic activity">
    <reaction evidence="1">
        <text>dihydroxyacetone phosphate = methylglyoxal + phosphate</text>
        <dbReference type="Rhea" id="RHEA:17937"/>
        <dbReference type="ChEBI" id="CHEBI:17158"/>
        <dbReference type="ChEBI" id="CHEBI:43474"/>
        <dbReference type="ChEBI" id="CHEBI:57642"/>
        <dbReference type="EC" id="4.2.3.3"/>
    </reaction>
</comment>
<comment type="similarity">
    <text evidence="1">Belongs to the methylglyoxal synthase family.</text>
</comment>
<sequence length="152" mass="16921">MEFTTRTIAARKHIALVAHDHRKQALLAWVEDNKSVLEQHQLYATGTTGNLIQQASGIPVNSMLSGPMGGDQQVGALIAEGKIDMLIFFWDPLNAVPHDPDVKALLRLATVWNIPVATNRSTADFLIDSSLFKSEVEIAIPDYQRYLQDRLK</sequence>
<name>MGSA_SERP5</name>
<protein>
    <recommendedName>
        <fullName evidence="1">Methylglyoxal synthase</fullName>
        <shortName evidence="1">MGS</shortName>
        <ecNumber evidence="1">4.2.3.3</ecNumber>
    </recommendedName>
</protein>
<proteinExistence type="inferred from homology"/>
<gene>
    <name evidence="1" type="primary">mgsA</name>
    <name type="ordered locus">Spro_1760</name>
</gene>
<accession>A8GCM4</accession>
<organism>
    <name type="scientific">Serratia proteamaculans (strain 568)</name>
    <dbReference type="NCBI Taxonomy" id="399741"/>
    <lineage>
        <taxon>Bacteria</taxon>
        <taxon>Pseudomonadati</taxon>
        <taxon>Pseudomonadota</taxon>
        <taxon>Gammaproteobacteria</taxon>
        <taxon>Enterobacterales</taxon>
        <taxon>Yersiniaceae</taxon>
        <taxon>Serratia</taxon>
    </lineage>
</organism>